<sequence>MGQETEISKRYQVAKERYQAIGVDTEKALKTLKDIKISMHCWQGDDVKGFLNPDGELTGGIMATGNYPGAAHTPKQLRQDLEKAYSLIPGKHKLNLHAIYVDTDEKVDLNEIEPKHFTPWVEWAKEQGLGLDFNPTFFSHPMFKDNYTLASPDKEVRDFWIEHGKRSRKISEYFGKELGQTSINNFWVPDGIKDCPIDRYTPRKRLMEALDEVFAEKLDEKYTQEAVESKLFGLGAEAYTVGSHEFYMGYGITRDKLICLDAGHFHPTEVISNKLSSLALFSKGVMLHVSRPVRWDSDHVVIMDDELIEIGRELVRNDLLGITNIGLDFFDATINRIAAWVVGTRNTQKSLLKALLEPTADLKKMELENDFTSRMAITEELKDFPFGDVWNYFCEINGVPVGLDWLKEVKAYEEDVLLKR</sequence>
<name>RHAA_LISMH</name>
<feature type="chain" id="PRO_1000146583" description="L-rhamnose isomerase">
    <location>
        <begin position="1"/>
        <end position="420"/>
    </location>
</feature>
<feature type="binding site" evidence="1">
    <location>
        <position position="264"/>
    </location>
    <ligand>
        <name>Mn(2+)</name>
        <dbReference type="ChEBI" id="CHEBI:29035"/>
    </ligand>
</feature>
<feature type="binding site" evidence="1">
    <location>
        <position position="296"/>
    </location>
    <ligand>
        <name>Mn(2+)</name>
        <dbReference type="ChEBI" id="CHEBI:29035"/>
    </ligand>
</feature>
<feature type="binding site" evidence="1">
    <location>
        <position position="298"/>
    </location>
    <ligand>
        <name>Mn(2+)</name>
        <dbReference type="ChEBI" id="CHEBI:29035"/>
    </ligand>
</feature>
<keyword id="KW-0963">Cytoplasm</keyword>
<keyword id="KW-0413">Isomerase</keyword>
<keyword id="KW-0464">Manganese</keyword>
<keyword id="KW-0479">Metal-binding</keyword>
<keyword id="KW-0684">Rhamnose metabolism</keyword>
<protein>
    <recommendedName>
        <fullName evidence="1">L-rhamnose isomerase</fullName>
        <ecNumber evidence="1">5.3.1.14</ecNumber>
    </recommendedName>
</protein>
<proteinExistence type="inferred from homology"/>
<evidence type="ECO:0000255" key="1">
    <source>
        <dbReference type="HAMAP-Rule" id="MF_00541"/>
    </source>
</evidence>
<organism>
    <name type="scientific">Listeria monocytogenes serotype 4a (strain HCC23)</name>
    <dbReference type="NCBI Taxonomy" id="552536"/>
    <lineage>
        <taxon>Bacteria</taxon>
        <taxon>Bacillati</taxon>
        <taxon>Bacillota</taxon>
        <taxon>Bacilli</taxon>
        <taxon>Bacillales</taxon>
        <taxon>Listeriaceae</taxon>
        <taxon>Listeria</taxon>
    </lineage>
</organism>
<dbReference type="EC" id="5.3.1.14" evidence="1"/>
<dbReference type="EMBL" id="CP001175">
    <property type="protein sequence ID" value="ACK41008.1"/>
    <property type="molecule type" value="Genomic_DNA"/>
</dbReference>
<dbReference type="RefSeq" id="WP_003723720.1">
    <property type="nucleotide sequence ID" value="NC_011660.1"/>
</dbReference>
<dbReference type="SMR" id="B8DCW2"/>
<dbReference type="KEGG" id="lmh:LMHCC_2673"/>
<dbReference type="HOGENOM" id="CLU_052790_0_0_9"/>
<dbReference type="UniPathway" id="UPA00541">
    <property type="reaction ID" value="UER00601"/>
</dbReference>
<dbReference type="GO" id="GO:0005737">
    <property type="term" value="C:cytoplasm"/>
    <property type="evidence" value="ECO:0007669"/>
    <property type="project" value="UniProtKB-SubCell"/>
</dbReference>
<dbReference type="GO" id="GO:0008740">
    <property type="term" value="F:L-rhamnose isomerase activity"/>
    <property type="evidence" value="ECO:0007669"/>
    <property type="project" value="UniProtKB-UniRule"/>
</dbReference>
<dbReference type="GO" id="GO:0030145">
    <property type="term" value="F:manganese ion binding"/>
    <property type="evidence" value="ECO:0007669"/>
    <property type="project" value="UniProtKB-UniRule"/>
</dbReference>
<dbReference type="GO" id="GO:0019324">
    <property type="term" value="P:L-lyxose metabolic process"/>
    <property type="evidence" value="ECO:0007669"/>
    <property type="project" value="TreeGrafter"/>
</dbReference>
<dbReference type="GO" id="GO:0019301">
    <property type="term" value="P:rhamnose catabolic process"/>
    <property type="evidence" value="ECO:0007669"/>
    <property type="project" value="UniProtKB-UniRule"/>
</dbReference>
<dbReference type="FunFam" id="3.20.20.150:FF:000006">
    <property type="entry name" value="L-rhamnose isomerase"/>
    <property type="match status" value="1"/>
</dbReference>
<dbReference type="Gene3D" id="3.20.20.150">
    <property type="entry name" value="Divalent-metal-dependent TIM barrel enzymes"/>
    <property type="match status" value="1"/>
</dbReference>
<dbReference type="HAMAP" id="MF_00541">
    <property type="entry name" value="RhaA"/>
    <property type="match status" value="1"/>
</dbReference>
<dbReference type="InterPro" id="IPR050337">
    <property type="entry name" value="L-rhamnose_isomerase"/>
</dbReference>
<dbReference type="InterPro" id="IPR009308">
    <property type="entry name" value="Rhamnose_isomerase"/>
</dbReference>
<dbReference type="InterPro" id="IPR036237">
    <property type="entry name" value="Xyl_isomerase-like_sf"/>
</dbReference>
<dbReference type="NCBIfam" id="NF002203">
    <property type="entry name" value="PRK01076.1"/>
    <property type="match status" value="1"/>
</dbReference>
<dbReference type="NCBIfam" id="TIGR01748">
    <property type="entry name" value="rhaA"/>
    <property type="match status" value="1"/>
</dbReference>
<dbReference type="PANTHER" id="PTHR30268">
    <property type="entry name" value="L-RHAMNOSE ISOMERASE"/>
    <property type="match status" value="1"/>
</dbReference>
<dbReference type="PANTHER" id="PTHR30268:SF0">
    <property type="entry name" value="L-RHAMNOSE ISOMERASE"/>
    <property type="match status" value="1"/>
</dbReference>
<dbReference type="Pfam" id="PF06134">
    <property type="entry name" value="RhaA"/>
    <property type="match status" value="1"/>
</dbReference>
<dbReference type="SUPFAM" id="SSF51658">
    <property type="entry name" value="Xylose isomerase-like"/>
    <property type="match status" value="1"/>
</dbReference>
<gene>
    <name evidence="1" type="primary">rhaA</name>
    <name type="ordered locus">LMHCC_2673</name>
</gene>
<comment type="function">
    <text evidence="1">Catalyzes the interconversion of L-rhamnose and L-rhamnulose.</text>
</comment>
<comment type="catalytic activity">
    <reaction evidence="1">
        <text>L-rhamnopyranose = L-rhamnulose</text>
        <dbReference type="Rhea" id="RHEA:23160"/>
        <dbReference type="ChEBI" id="CHEBI:17897"/>
        <dbReference type="ChEBI" id="CHEBI:62346"/>
        <dbReference type="EC" id="5.3.1.14"/>
    </reaction>
</comment>
<comment type="cofactor">
    <cofactor evidence="1">
        <name>Mn(2+)</name>
        <dbReference type="ChEBI" id="CHEBI:29035"/>
    </cofactor>
    <text evidence="1">Binds 1 Mn(2+) ion per subunit.</text>
</comment>
<comment type="pathway">
    <text evidence="1">Carbohydrate degradation; L-rhamnose degradation; glycerone phosphate from L-rhamnose: step 1/3.</text>
</comment>
<comment type="subcellular location">
    <subcellularLocation>
        <location evidence="1">Cytoplasm</location>
    </subcellularLocation>
</comment>
<comment type="similarity">
    <text evidence="1">Belongs to the rhamnose isomerase family.</text>
</comment>
<reference key="1">
    <citation type="journal article" date="2011" name="J. Bacteriol.">
        <title>Genome sequence of lineage III Listeria monocytogenes strain HCC23.</title>
        <authorList>
            <person name="Steele C.L."/>
            <person name="Donaldson J.R."/>
            <person name="Paul D."/>
            <person name="Banes M.M."/>
            <person name="Arick T."/>
            <person name="Bridges S.M."/>
            <person name="Lawrence M.L."/>
        </authorList>
    </citation>
    <scope>NUCLEOTIDE SEQUENCE [LARGE SCALE GENOMIC DNA]</scope>
    <source>
        <strain>HCC23</strain>
    </source>
</reference>
<accession>B8DCW2</accession>